<dbReference type="EMBL" id="U18997">
    <property type="protein sequence ID" value="AAA57997.1"/>
    <property type="molecule type" value="Genomic_DNA"/>
</dbReference>
<dbReference type="EMBL" id="U00096">
    <property type="protein sequence ID" value="AAC76228.1"/>
    <property type="molecule type" value="Genomic_DNA"/>
</dbReference>
<dbReference type="EMBL" id="AP009048">
    <property type="protein sequence ID" value="BAE77240.1"/>
    <property type="molecule type" value="Genomic_DNA"/>
</dbReference>
<dbReference type="PIR" id="F65110">
    <property type="entry name" value="F65110"/>
</dbReference>
<dbReference type="RefSeq" id="NP_417663.1">
    <property type="nucleotide sequence ID" value="NC_000913.3"/>
</dbReference>
<dbReference type="RefSeq" id="WP_000922901.1">
    <property type="nucleotide sequence ID" value="NZ_LN832404.1"/>
</dbReference>
<dbReference type="SMR" id="P45394"/>
<dbReference type="BioGRID" id="4261579">
    <property type="interactions" value="6"/>
</dbReference>
<dbReference type="FunCoup" id="P45394">
    <property type="interactions" value="239"/>
</dbReference>
<dbReference type="STRING" id="511145.b3196"/>
<dbReference type="TCDB" id="2.A.19.5.1">
    <property type="family name" value="the ca(2+):cation antiporter (caca) family"/>
</dbReference>
<dbReference type="PaxDb" id="511145-b3196"/>
<dbReference type="EnsemblBacteria" id="AAC76228">
    <property type="protein sequence ID" value="AAC76228"/>
    <property type="gene ID" value="b3196"/>
</dbReference>
<dbReference type="GeneID" id="947730"/>
<dbReference type="KEGG" id="ecj:JW3163"/>
<dbReference type="KEGG" id="eco:b3196"/>
<dbReference type="KEGG" id="ecoc:C3026_17395"/>
<dbReference type="PATRIC" id="fig|1411691.4.peg.3535"/>
<dbReference type="EchoBASE" id="EB2654"/>
<dbReference type="eggNOG" id="COG0530">
    <property type="taxonomic scope" value="Bacteria"/>
</dbReference>
<dbReference type="HOGENOM" id="CLU_007948_0_2_6"/>
<dbReference type="InParanoid" id="P45394"/>
<dbReference type="OMA" id="ALIIMPM"/>
<dbReference type="OrthoDB" id="9794225at2"/>
<dbReference type="PhylomeDB" id="P45394"/>
<dbReference type="BioCyc" id="EcoCyc:YRBG-MONOMER"/>
<dbReference type="PRO" id="PR:P45394"/>
<dbReference type="Proteomes" id="UP000000625">
    <property type="component" value="Chromosome"/>
</dbReference>
<dbReference type="GO" id="GO:0005886">
    <property type="term" value="C:plasma membrane"/>
    <property type="evidence" value="ECO:0000314"/>
    <property type="project" value="EcoCyc"/>
</dbReference>
<dbReference type="GO" id="GO:0005262">
    <property type="term" value="F:calcium channel activity"/>
    <property type="evidence" value="ECO:0000318"/>
    <property type="project" value="GO_Central"/>
</dbReference>
<dbReference type="GO" id="GO:0008273">
    <property type="term" value="F:calcium, potassium:sodium antiporter activity"/>
    <property type="evidence" value="ECO:0000318"/>
    <property type="project" value="GO_Central"/>
</dbReference>
<dbReference type="GO" id="GO:0070588">
    <property type="term" value="P:calcium ion transmembrane transport"/>
    <property type="evidence" value="ECO:0000318"/>
    <property type="project" value="GO_Central"/>
</dbReference>
<dbReference type="GO" id="GO:0006874">
    <property type="term" value="P:intracellular calcium ion homeostasis"/>
    <property type="evidence" value="ECO:0000318"/>
    <property type="project" value="GO_Central"/>
</dbReference>
<dbReference type="Gene3D" id="1.20.1420.30">
    <property type="entry name" value="NCX, central ion-binding region"/>
    <property type="match status" value="1"/>
</dbReference>
<dbReference type="InterPro" id="IPR004481">
    <property type="entry name" value="K/Na/Ca-exchanger"/>
</dbReference>
<dbReference type="InterPro" id="IPR004837">
    <property type="entry name" value="NaCa_Exmemb"/>
</dbReference>
<dbReference type="InterPro" id="IPR044880">
    <property type="entry name" value="NCX_ion-bd_dom_sf"/>
</dbReference>
<dbReference type="NCBIfam" id="TIGR00367">
    <property type="entry name" value="calcium/sodium antiporter"/>
    <property type="match status" value="1"/>
</dbReference>
<dbReference type="NCBIfam" id="NF008005">
    <property type="entry name" value="PRK10734.1"/>
    <property type="match status" value="1"/>
</dbReference>
<dbReference type="PANTHER" id="PTHR10846:SF8">
    <property type="entry name" value="INNER MEMBRANE PROTEIN YRBG"/>
    <property type="match status" value="1"/>
</dbReference>
<dbReference type="PANTHER" id="PTHR10846">
    <property type="entry name" value="SODIUM/POTASSIUM/CALCIUM EXCHANGER"/>
    <property type="match status" value="1"/>
</dbReference>
<dbReference type="Pfam" id="PF01699">
    <property type="entry name" value="Na_Ca_ex"/>
    <property type="match status" value="2"/>
</dbReference>
<protein>
    <recommendedName>
        <fullName>Inner membrane protein YrbG</fullName>
    </recommendedName>
</protein>
<gene>
    <name type="primary">yrbG</name>
    <name type="ordered locus">b3196</name>
    <name type="ordered locus">JW3163</name>
</gene>
<sequence>MLLATALLIVGLLLVVYSADRLVFAASILCRTFGIPPLIIGMTVVSIGTSLPEVIVSLAASLHEQRDLAVGTALGSNIINILLILGLAALVRPFTVHSDVLRRELPLMLLVSVVAGSVLYDGQLSRSDGIFLLFLAVLWLLFIVKLARQAERQGTDSLTREQLAELPRDGGLPVAFLWLGIALIIMPVATRMVVDNATVLANYFAISELTMGLTAIAIGTSLPELATAIAGVRKGENDIAVGNIIGANIFNIVIVLGLPALITPGEIDPLAYSRDYSVMLLVSIIFALLCWRRSPQPGRGVGVLLTGGFIVWLAMLYWLSPILVE</sequence>
<feature type="chain" id="PRO_0000209507" description="Inner membrane protein YrbG">
    <location>
        <begin position="1"/>
        <end position="325"/>
    </location>
</feature>
<feature type="topological domain" description="Periplasmic" evidence="1">
    <location>
        <begin position="1"/>
        <end position="5"/>
    </location>
</feature>
<feature type="transmembrane region" description="Helical" evidence="1">
    <location>
        <begin position="6"/>
        <end position="26"/>
    </location>
</feature>
<feature type="topological domain" description="Cytoplasmic" evidence="1">
    <location>
        <begin position="27"/>
        <end position="37"/>
    </location>
</feature>
<feature type="transmembrane region" description="Helical" evidence="1">
    <location>
        <begin position="38"/>
        <end position="58"/>
    </location>
</feature>
<feature type="topological domain" description="Periplasmic" evidence="1">
    <location>
        <begin position="59"/>
        <end position="67"/>
    </location>
</feature>
<feature type="transmembrane region" description="Helical" evidence="1">
    <location>
        <begin position="68"/>
        <end position="88"/>
    </location>
</feature>
<feature type="topological domain" description="Cytoplasmic" evidence="1">
    <location>
        <begin position="89"/>
        <end position="104"/>
    </location>
</feature>
<feature type="transmembrane region" description="Helical" evidence="1">
    <location>
        <begin position="105"/>
        <end position="125"/>
    </location>
</feature>
<feature type="topological domain" description="Periplasmic" evidence="1">
    <location>
        <position position="126"/>
    </location>
</feature>
<feature type="transmembrane region" description="Helical" evidence="1">
    <location>
        <begin position="127"/>
        <end position="147"/>
    </location>
</feature>
<feature type="topological domain" description="Cytoplasmic" evidence="1">
    <location>
        <begin position="148"/>
        <end position="169"/>
    </location>
</feature>
<feature type="transmembrane region" description="Helical" evidence="1">
    <location>
        <begin position="170"/>
        <end position="190"/>
    </location>
</feature>
<feature type="topological domain" description="Periplasmic" evidence="1">
    <location>
        <begin position="191"/>
        <end position="198"/>
    </location>
</feature>
<feature type="transmembrane region" description="Helical" evidence="1">
    <location>
        <begin position="199"/>
        <end position="219"/>
    </location>
</feature>
<feature type="topological domain" description="Cytoplasmic" evidence="1">
    <location>
        <begin position="220"/>
        <end position="243"/>
    </location>
</feature>
<feature type="transmembrane region" description="Helical" evidence="1">
    <location>
        <begin position="244"/>
        <end position="264"/>
    </location>
</feature>
<feature type="topological domain" description="Periplasmic" evidence="1">
    <location>
        <begin position="265"/>
        <end position="269"/>
    </location>
</feature>
<feature type="transmembrane region" description="Helical" evidence="1">
    <location>
        <begin position="270"/>
        <end position="290"/>
    </location>
</feature>
<feature type="topological domain" description="Cytoplasmic" evidence="1">
    <location>
        <begin position="291"/>
        <end position="302"/>
    </location>
</feature>
<feature type="transmembrane region" description="Helical" evidence="1">
    <location>
        <begin position="303"/>
        <end position="323"/>
    </location>
</feature>
<feature type="topological domain" description="Periplasmic" evidence="1">
    <location>
        <begin position="324"/>
        <end position="325"/>
    </location>
</feature>
<reference key="1">
    <citation type="journal article" date="1997" name="Science">
        <title>The complete genome sequence of Escherichia coli K-12.</title>
        <authorList>
            <person name="Blattner F.R."/>
            <person name="Plunkett G. III"/>
            <person name="Bloch C.A."/>
            <person name="Perna N.T."/>
            <person name="Burland V."/>
            <person name="Riley M."/>
            <person name="Collado-Vides J."/>
            <person name="Glasner J.D."/>
            <person name="Rode C.K."/>
            <person name="Mayhew G.F."/>
            <person name="Gregor J."/>
            <person name="Davis N.W."/>
            <person name="Kirkpatrick H.A."/>
            <person name="Goeden M.A."/>
            <person name="Rose D.J."/>
            <person name="Mau B."/>
            <person name="Shao Y."/>
        </authorList>
    </citation>
    <scope>NUCLEOTIDE SEQUENCE [LARGE SCALE GENOMIC DNA]</scope>
    <source>
        <strain>K12 / MG1655 / ATCC 47076</strain>
    </source>
</reference>
<reference key="2">
    <citation type="journal article" date="2006" name="Mol. Syst. Biol.">
        <title>Highly accurate genome sequences of Escherichia coli K-12 strains MG1655 and W3110.</title>
        <authorList>
            <person name="Hayashi K."/>
            <person name="Morooka N."/>
            <person name="Yamamoto Y."/>
            <person name="Fujita K."/>
            <person name="Isono K."/>
            <person name="Choi S."/>
            <person name="Ohtsubo E."/>
            <person name="Baba T."/>
            <person name="Wanner B.L."/>
            <person name="Mori H."/>
            <person name="Horiuchi T."/>
        </authorList>
    </citation>
    <scope>NUCLEOTIDE SEQUENCE [LARGE SCALE GENOMIC DNA]</scope>
    <source>
        <strain>K12 / W3110 / ATCC 27325 / DSM 5911</strain>
    </source>
</reference>
<reference key="3">
    <citation type="journal article" date="2005" name="Science">
        <title>Global topology analysis of the Escherichia coli inner membrane proteome.</title>
        <authorList>
            <person name="Daley D.O."/>
            <person name="Rapp M."/>
            <person name="Granseth E."/>
            <person name="Melen K."/>
            <person name="Drew D."/>
            <person name="von Heijne G."/>
        </authorList>
    </citation>
    <scope>TOPOLOGY [LARGE SCALE ANALYSIS]</scope>
    <source>
        <strain>K12 / MG1655 / ATCC 47076</strain>
    </source>
</reference>
<evidence type="ECO:0000255" key="1"/>
<evidence type="ECO:0000305" key="2"/>
<proteinExistence type="evidence at protein level"/>
<comment type="subcellular location">
    <subcellularLocation>
        <location>Cell inner membrane</location>
        <topology>Multi-pass membrane protein</topology>
    </subcellularLocation>
</comment>
<comment type="similarity">
    <text evidence="2">Belongs to the Ca(2+):cation antiporter (CaCA) (TC 2.A.19) family.</text>
</comment>
<organism>
    <name type="scientific">Escherichia coli (strain K12)</name>
    <dbReference type="NCBI Taxonomy" id="83333"/>
    <lineage>
        <taxon>Bacteria</taxon>
        <taxon>Pseudomonadati</taxon>
        <taxon>Pseudomonadota</taxon>
        <taxon>Gammaproteobacteria</taxon>
        <taxon>Enterobacterales</taxon>
        <taxon>Enterobacteriaceae</taxon>
        <taxon>Escherichia</taxon>
    </lineage>
</organism>
<accession>P45394</accession>
<accession>Q2M916</accession>
<name>YRBG_ECOLI</name>
<keyword id="KW-0997">Cell inner membrane</keyword>
<keyword id="KW-1003">Cell membrane</keyword>
<keyword id="KW-0472">Membrane</keyword>
<keyword id="KW-1185">Reference proteome</keyword>
<keyword id="KW-0812">Transmembrane</keyword>
<keyword id="KW-1133">Transmembrane helix</keyword>